<feature type="chain" id="PRO_0000222735" description="Core protein VP7">
    <location>
        <begin position="1"/>
        <end position="349"/>
    </location>
</feature>
<feature type="glycosylation site" description="N-linked (GlcNAc...) asparagine; by host" evidence="1">
    <location>
        <position position="287"/>
    </location>
</feature>
<reference key="1">
    <citation type="journal article" date="1990" name="Nucleic Acids Res.">
        <title>The complete nucleotide and deduced amino acid sequence of the gene encoding the major inner capsid protein, VP7 of US bluetongue virus serotype 17.</title>
        <authorList>
            <person name="Kowalik T.F."/>
            <person name="Li J.K.-K."/>
            <person name="Chuang R.Y."/>
            <person name="Doi R.H."/>
            <person name="Osburn B.L."/>
        </authorList>
    </citation>
    <scope>NUCLEOTIDE SEQUENCE [GENOMIC RNA]</scope>
</reference>
<organismHost>
    <name type="scientific">Antilocapra americana</name>
    <name type="common">Pronghorn</name>
    <dbReference type="NCBI Taxonomy" id="9891"/>
</organismHost>
<organismHost>
    <name type="scientific">Bos taurus</name>
    <name type="common">Bovine</name>
    <dbReference type="NCBI Taxonomy" id="9913"/>
</organismHost>
<organismHost>
    <name type="scientific">Capra hircus</name>
    <name type="common">Goat</name>
    <dbReference type="NCBI Taxonomy" id="9925"/>
</organismHost>
<organismHost>
    <name type="scientific">Culicoides variipennis</name>
    <name type="common">Biting midge</name>
    <dbReference type="NCBI Taxonomy" id="46212"/>
</organismHost>
<organismHost>
    <name type="scientific">Ovis aries</name>
    <name type="common">Sheep</name>
    <dbReference type="NCBI Taxonomy" id="9940"/>
</organismHost>
<keyword id="KW-0167">Capsid protein</keyword>
<keyword id="KW-0325">Glycoprotein</keyword>
<keyword id="KW-1152">Outer capsid protein</keyword>
<keyword id="KW-0946">Virion</keyword>
<dbReference type="EMBL" id="X53693">
    <property type="protein sequence ID" value="CAA37731.1"/>
    <property type="molecule type" value="Genomic_RNA"/>
</dbReference>
<dbReference type="PIR" id="S11216">
    <property type="entry name" value="S11216"/>
</dbReference>
<dbReference type="SMR" id="P18609"/>
<dbReference type="GlyCosmos" id="P18609">
    <property type="glycosylation" value="1 site, No reported glycans"/>
</dbReference>
<dbReference type="GO" id="GO:0019031">
    <property type="term" value="C:viral envelope"/>
    <property type="evidence" value="ECO:0007669"/>
    <property type="project" value="InterPro"/>
</dbReference>
<dbReference type="GO" id="GO:0039624">
    <property type="term" value="C:viral outer capsid"/>
    <property type="evidence" value="ECO:0007669"/>
    <property type="project" value="UniProtKB-KW"/>
</dbReference>
<dbReference type="GO" id="GO:0046789">
    <property type="term" value="F:host cell surface receptor binding"/>
    <property type="evidence" value="ECO:0007669"/>
    <property type="project" value="InterPro"/>
</dbReference>
<dbReference type="GO" id="GO:0005198">
    <property type="term" value="F:structural molecule activity"/>
    <property type="evidence" value="ECO:0007669"/>
    <property type="project" value="InterPro"/>
</dbReference>
<dbReference type="GO" id="GO:0019064">
    <property type="term" value="P:fusion of virus membrane with host plasma membrane"/>
    <property type="evidence" value="ECO:0007669"/>
    <property type="project" value="InterPro"/>
</dbReference>
<dbReference type="Gene3D" id="2.60.120.170">
    <property type="match status" value="1"/>
</dbReference>
<dbReference type="Gene3D" id="1.10.250.10">
    <property type="entry name" value="Bluetongue Virus 10, subunit 1, domain 1"/>
    <property type="match status" value="1"/>
</dbReference>
<dbReference type="Gene3D" id="1.10.170.10">
    <property type="entry name" value="Bluetongue Virus 10, subunit 1, domain 3"/>
    <property type="match status" value="1"/>
</dbReference>
<dbReference type="InterPro" id="IPR008980">
    <property type="entry name" value="Capsid_hemagglutn"/>
</dbReference>
<dbReference type="InterPro" id="IPR001803">
    <property type="entry name" value="Orbi_VP7_capsid"/>
</dbReference>
<dbReference type="InterPro" id="IPR023178">
    <property type="entry name" value="Orbi_VP7_capsid_C"/>
</dbReference>
<dbReference type="InterPro" id="IPR023176">
    <property type="entry name" value="Orbi_VP7_capsid_N"/>
</dbReference>
<dbReference type="InterPro" id="IPR008935">
    <property type="entry name" value="Virus_capsid_a-hlx_vir"/>
</dbReference>
<dbReference type="Pfam" id="PF00897">
    <property type="entry name" value="Orbi_VP7"/>
    <property type="match status" value="1"/>
</dbReference>
<dbReference type="PRINTS" id="PR00903">
    <property type="entry name" value="VP7CAPSID"/>
</dbReference>
<dbReference type="SUPFAM" id="SSF48345">
    <property type="entry name" value="A virus capsid protein alpha-helical domain"/>
    <property type="match status" value="1"/>
</dbReference>
<dbReference type="SUPFAM" id="SSF49818">
    <property type="entry name" value="Viral protein domain"/>
    <property type="match status" value="1"/>
</dbReference>
<gene>
    <name type="primary">Segment-7</name>
</gene>
<name>VP7_BTV17</name>
<accession>P18609</accession>
<proteinExistence type="inferred from homology"/>
<sequence>MDTIAARALTVMRACATLQEARIVLEANVMEILGIAINRYNGLTLRGVTMRPTSLAQRNEMFFMCLDMMLSATGINVGPISPDYTQHMATIGVLATPEIPFTTEAANEIARVTGETSTWGPARQPYGFFLETEETFQPGRWFMRAAQAVTAVVCGPDMIQVSLNAGARGDVQQIFQGRNDPMMIYLVWRRIENFAMAQGNSQQTQAGVTVSVGGVDMRAGRIIAWDGQAALHVHNPTQQNAMVQIQVVFYISMDKTLNQYPALTAEIFNVYSFRDHTWHGLRTAILNRTTLPNMLPPIFPPNDRDSILTLLPLSTLADVYTVLRPEFAIHGVNPMPGPLTRAIARAAYV</sequence>
<organism>
    <name type="scientific">Bluetongue virus 17 (isolate USA)</name>
    <name type="common">BTV 17</name>
    <dbReference type="NCBI Taxonomy" id="33718"/>
    <lineage>
        <taxon>Viruses</taxon>
        <taxon>Riboviria</taxon>
        <taxon>Orthornavirae</taxon>
        <taxon>Duplornaviricota</taxon>
        <taxon>Resentoviricetes</taxon>
        <taxon>Reovirales</taxon>
        <taxon>Sedoreoviridae</taxon>
        <taxon>Orbivirus</taxon>
        <taxon>Bluetongue virus</taxon>
    </lineage>
</organism>
<comment type="function">
    <text>The VP7 protein is one of the five proteins (with VP1, VP3, VP4, and VP6) which form the inner capsid of the virus.</text>
</comment>
<comment type="subunit">
    <text>Homotrimer that assemble in a complex of 260 capsomers on an inner scaffold composed of VP3.</text>
</comment>
<comment type="subcellular location">
    <subcellularLocation>
        <location evidence="2">Virion</location>
    </subcellularLocation>
</comment>
<comment type="similarity">
    <text evidence="2">Belongs to the orbivirus VP7 family.</text>
</comment>
<protein>
    <recommendedName>
        <fullName>Core protein VP7</fullName>
    </recommendedName>
</protein>
<evidence type="ECO:0000255" key="1"/>
<evidence type="ECO:0000305" key="2"/>